<comment type="subcellular location">
    <subcellularLocation>
        <location evidence="1">Nucleus</location>
    </subcellularLocation>
</comment>
<keyword id="KW-0238">DNA-binding</keyword>
<keyword id="KW-0539">Nucleus</keyword>
<keyword id="KW-1185">Reference proteome</keyword>
<keyword id="KW-0804">Transcription</keyword>
<keyword id="KW-0805">Transcription regulation</keyword>
<sequence>MQSDTLTVQTVPNTTNVTNTEHSMLAKIEENRHIIQTIWEKQNLGKLTECEQFQKRLHSNLLLLAPLADHQQNYHKQQQALLQQQQQQQQALLQQQQQSPVTNVATNTPPTLQHSISSPSPNNFNNNNNANNQFLSPNSPQVAKSSPSQNNPSTPIANTPTTTTTTAATTATNTNTMMSGSSGGVVSPVSNQQQQQSIQSPSQQSVVQRSPSQSLNSSASSIQSLQNIQNTQNTIQQLTNSLTQVKTIIQQYQSQNQQVPQDVISRYHEFYSMLQQQQQNLLQQQSLLQQQQALLQQQQVGNPMQQSNDMQPQTPQQNNMQQQQQPQTPQQTNMQQPQTPQQNSMQPSQQPITQQEYQQIYDKIVSMSSQILLCNQNIQKLQSESYDPHVLQGLQNQVANLEIAQANSLRFLPQQYHVVLFQQQQQQQANQQQLQLMQIKQSKEYMVLTPAQQLIYNQQIQQNHYNQQVILRQQQQKLMAILEQQNQMIAQQQQQQHQMHQQHQMQPQQQQQQHQMHQQSPQQPQQMGMGGNPPSLEMISPMSAVMNGVTSPMNQGMMSSNNGMPTITTSLSAISPTSPIGTNLNMSNPTTTTVANVTTTAATTTTASSSGKEEKEKKKDKKDKDKDKDKDDDDKESKKDKKDKKDKKASKEKTSHWTSEEHNKFLEAVQQFGIKDYHAIAKFVQTRNHHQVRTHVNTYLKNQKKAEAATSSTQVSTPQQQLPIVGTPQQSVGTPQQQQPPIEQTPPPPQQQQQPPQLTPEQQLASQQQQATLQFQQYQQPQDQQQQQYQQYQQYDPQQQQQQPQQQPPPPQTTPPNNENNNNINNNLENTNNNDNGNNNNNEYNSGFDSNSGLNDEMGIGLFGSPGNNSNNNLGISIEGNNFDDNPSISSPGV</sequence>
<accession>Q86HX9</accession>
<accession>Q550F9</accession>
<dbReference type="EMBL" id="AAFI02000019">
    <property type="protein sequence ID" value="EAL68940.1"/>
    <property type="molecule type" value="Genomic_DNA"/>
</dbReference>
<dbReference type="RefSeq" id="XP_642973.1">
    <property type="nucleotide sequence ID" value="XM_637881.1"/>
</dbReference>
<dbReference type="SMR" id="Q86HX9"/>
<dbReference type="STRING" id="44689.Q86HX9"/>
<dbReference type="GlyGen" id="Q86HX9">
    <property type="glycosylation" value="1 site"/>
</dbReference>
<dbReference type="PaxDb" id="44689-DDB0220507"/>
<dbReference type="EnsemblProtists" id="EAL68940">
    <property type="protein sequence ID" value="EAL68940"/>
    <property type="gene ID" value="DDB_G0276877"/>
</dbReference>
<dbReference type="GeneID" id="8620845"/>
<dbReference type="KEGG" id="ddi:DDB_G0276877"/>
<dbReference type="dictyBase" id="DDB_G0276877">
    <property type="gene designation" value="mybK"/>
</dbReference>
<dbReference type="VEuPathDB" id="AmoebaDB:DDB_G0276877"/>
<dbReference type="eggNOG" id="ENOG502RDH7">
    <property type="taxonomic scope" value="Eukaryota"/>
</dbReference>
<dbReference type="HOGENOM" id="CLU_323509_0_0_1"/>
<dbReference type="InParanoid" id="Q86HX9"/>
<dbReference type="OMA" id="CANAAMQ"/>
<dbReference type="PRO" id="PR:Q86HX9"/>
<dbReference type="Proteomes" id="UP000002195">
    <property type="component" value="Chromosome 2"/>
</dbReference>
<dbReference type="GO" id="GO:0005634">
    <property type="term" value="C:nucleus"/>
    <property type="evidence" value="ECO:0007669"/>
    <property type="project" value="UniProtKB-SubCell"/>
</dbReference>
<dbReference type="GO" id="GO:0003677">
    <property type="term" value="F:DNA binding"/>
    <property type="evidence" value="ECO:0007669"/>
    <property type="project" value="UniProtKB-KW"/>
</dbReference>
<dbReference type="CDD" id="cd00167">
    <property type="entry name" value="SANT"/>
    <property type="match status" value="1"/>
</dbReference>
<dbReference type="Gene3D" id="1.10.10.60">
    <property type="entry name" value="Homeodomain-like"/>
    <property type="match status" value="1"/>
</dbReference>
<dbReference type="InterPro" id="IPR009057">
    <property type="entry name" value="Homeodomain-like_sf"/>
</dbReference>
<dbReference type="InterPro" id="IPR017930">
    <property type="entry name" value="Myb_dom"/>
</dbReference>
<dbReference type="InterPro" id="IPR006447">
    <property type="entry name" value="Myb_dom_plants"/>
</dbReference>
<dbReference type="InterPro" id="IPR001005">
    <property type="entry name" value="SANT/Myb"/>
</dbReference>
<dbReference type="InterPro" id="IPR017884">
    <property type="entry name" value="SANT_dom"/>
</dbReference>
<dbReference type="NCBIfam" id="TIGR01557">
    <property type="entry name" value="myb_SHAQKYF"/>
    <property type="match status" value="1"/>
</dbReference>
<dbReference type="Pfam" id="PF00249">
    <property type="entry name" value="Myb_DNA-binding"/>
    <property type="match status" value="1"/>
</dbReference>
<dbReference type="SMART" id="SM00717">
    <property type="entry name" value="SANT"/>
    <property type="match status" value="1"/>
</dbReference>
<dbReference type="SUPFAM" id="SSF46689">
    <property type="entry name" value="Homeodomain-like"/>
    <property type="match status" value="1"/>
</dbReference>
<dbReference type="PROSITE" id="PS51294">
    <property type="entry name" value="HTH_MYB"/>
    <property type="match status" value="1"/>
</dbReference>
<evidence type="ECO:0000255" key="1">
    <source>
        <dbReference type="PROSITE-ProRule" id="PRU00625"/>
    </source>
</evidence>
<evidence type="ECO:0000256" key="2">
    <source>
        <dbReference type="SAM" id="MobiDB-lite"/>
    </source>
</evidence>
<protein>
    <recommendedName>
        <fullName>Myb-like protein K</fullName>
    </recommendedName>
</protein>
<organism>
    <name type="scientific">Dictyostelium discoideum</name>
    <name type="common">Social amoeba</name>
    <dbReference type="NCBI Taxonomy" id="44689"/>
    <lineage>
        <taxon>Eukaryota</taxon>
        <taxon>Amoebozoa</taxon>
        <taxon>Evosea</taxon>
        <taxon>Eumycetozoa</taxon>
        <taxon>Dictyostelia</taxon>
        <taxon>Dictyosteliales</taxon>
        <taxon>Dictyosteliaceae</taxon>
        <taxon>Dictyostelium</taxon>
    </lineage>
</organism>
<feature type="chain" id="PRO_0000329386" description="Myb-like protein K">
    <location>
        <begin position="1"/>
        <end position="894"/>
    </location>
</feature>
<feature type="domain" description="HTH myb-type" evidence="1">
    <location>
        <begin position="649"/>
        <end position="704"/>
    </location>
</feature>
<feature type="DNA-binding region" description="H-T-H motif" evidence="1">
    <location>
        <begin position="677"/>
        <end position="700"/>
    </location>
</feature>
<feature type="region of interest" description="Disordered" evidence="2">
    <location>
        <begin position="93"/>
        <end position="221"/>
    </location>
</feature>
<feature type="region of interest" description="Disordered" evidence="2">
    <location>
        <begin position="299"/>
        <end position="353"/>
    </location>
</feature>
<feature type="region of interest" description="Disordered" evidence="2">
    <location>
        <begin position="492"/>
        <end position="539"/>
    </location>
</feature>
<feature type="region of interest" description="Disordered" evidence="2">
    <location>
        <begin position="601"/>
        <end position="659"/>
    </location>
</feature>
<feature type="region of interest" description="Disordered" evidence="2">
    <location>
        <begin position="703"/>
        <end position="852"/>
    </location>
</feature>
<feature type="compositionally biased region" description="Low complexity" evidence="2">
    <location>
        <begin position="93"/>
        <end position="139"/>
    </location>
</feature>
<feature type="compositionally biased region" description="Polar residues" evidence="2">
    <location>
        <begin position="140"/>
        <end position="149"/>
    </location>
</feature>
<feature type="compositionally biased region" description="Low complexity" evidence="2">
    <location>
        <begin position="150"/>
        <end position="221"/>
    </location>
</feature>
<feature type="compositionally biased region" description="Polar residues" evidence="2">
    <location>
        <begin position="300"/>
        <end position="309"/>
    </location>
</feature>
<feature type="compositionally biased region" description="Low complexity" evidence="2">
    <location>
        <begin position="310"/>
        <end position="353"/>
    </location>
</feature>
<feature type="compositionally biased region" description="Low complexity" evidence="2">
    <location>
        <begin position="492"/>
        <end position="527"/>
    </location>
</feature>
<feature type="compositionally biased region" description="Basic and acidic residues" evidence="2">
    <location>
        <begin position="611"/>
        <end position="640"/>
    </location>
</feature>
<feature type="compositionally biased region" description="Basic and acidic residues" evidence="2">
    <location>
        <begin position="649"/>
        <end position="659"/>
    </location>
</feature>
<feature type="compositionally biased region" description="Low complexity" evidence="2">
    <location>
        <begin position="710"/>
        <end position="742"/>
    </location>
</feature>
<feature type="compositionally biased region" description="Low complexity" evidence="2">
    <location>
        <begin position="751"/>
        <end position="805"/>
    </location>
</feature>
<feature type="compositionally biased region" description="Low complexity" evidence="2">
    <location>
        <begin position="815"/>
        <end position="845"/>
    </location>
</feature>
<proteinExistence type="inferred from homology"/>
<reference key="1">
    <citation type="journal article" date="2002" name="Nature">
        <title>Sequence and analysis of chromosome 2 of Dictyostelium discoideum.</title>
        <authorList>
            <person name="Gloeckner G."/>
            <person name="Eichinger L."/>
            <person name="Szafranski K."/>
            <person name="Pachebat J.A."/>
            <person name="Bankier A.T."/>
            <person name="Dear P.H."/>
            <person name="Lehmann R."/>
            <person name="Baumgart C."/>
            <person name="Parra G."/>
            <person name="Abril J.F."/>
            <person name="Guigo R."/>
            <person name="Kumpf K."/>
            <person name="Tunggal B."/>
            <person name="Cox E.C."/>
            <person name="Quail M.A."/>
            <person name="Platzer M."/>
            <person name="Rosenthal A."/>
            <person name="Noegel A.A."/>
        </authorList>
    </citation>
    <scope>NUCLEOTIDE SEQUENCE [LARGE SCALE GENOMIC DNA]</scope>
    <source>
        <strain>AX4</strain>
    </source>
</reference>
<reference key="2">
    <citation type="journal article" date="2005" name="Nature">
        <title>The genome of the social amoeba Dictyostelium discoideum.</title>
        <authorList>
            <person name="Eichinger L."/>
            <person name="Pachebat J.A."/>
            <person name="Gloeckner G."/>
            <person name="Rajandream M.A."/>
            <person name="Sucgang R."/>
            <person name="Berriman M."/>
            <person name="Song J."/>
            <person name="Olsen R."/>
            <person name="Szafranski K."/>
            <person name="Xu Q."/>
            <person name="Tunggal B."/>
            <person name="Kummerfeld S."/>
            <person name="Madera M."/>
            <person name="Konfortov B.A."/>
            <person name="Rivero F."/>
            <person name="Bankier A.T."/>
            <person name="Lehmann R."/>
            <person name="Hamlin N."/>
            <person name="Davies R."/>
            <person name="Gaudet P."/>
            <person name="Fey P."/>
            <person name="Pilcher K."/>
            <person name="Chen G."/>
            <person name="Saunders D."/>
            <person name="Sodergren E.J."/>
            <person name="Davis P."/>
            <person name="Kerhornou A."/>
            <person name="Nie X."/>
            <person name="Hall N."/>
            <person name="Anjard C."/>
            <person name="Hemphill L."/>
            <person name="Bason N."/>
            <person name="Farbrother P."/>
            <person name="Desany B."/>
            <person name="Just E."/>
            <person name="Morio T."/>
            <person name="Rost R."/>
            <person name="Churcher C.M."/>
            <person name="Cooper J."/>
            <person name="Haydock S."/>
            <person name="van Driessche N."/>
            <person name="Cronin A."/>
            <person name="Goodhead I."/>
            <person name="Muzny D.M."/>
            <person name="Mourier T."/>
            <person name="Pain A."/>
            <person name="Lu M."/>
            <person name="Harper D."/>
            <person name="Lindsay R."/>
            <person name="Hauser H."/>
            <person name="James K.D."/>
            <person name="Quiles M."/>
            <person name="Madan Babu M."/>
            <person name="Saito T."/>
            <person name="Buchrieser C."/>
            <person name="Wardroper A."/>
            <person name="Felder M."/>
            <person name="Thangavelu M."/>
            <person name="Johnson D."/>
            <person name="Knights A."/>
            <person name="Loulseged H."/>
            <person name="Mungall K.L."/>
            <person name="Oliver K."/>
            <person name="Price C."/>
            <person name="Quail M.A."/>
            <person name="Urushihara H."/>
            <person name="Hernandez J."/>
            <person name="Rabbinowitsch E."/>
            <person name="Steffen D."/>
            <person name="Sanders M."/>
            <person name="Ma J."/>
            <person name="Kohara Y."/>
            <person name="Sharp S."/>
            <person name="Simmonds M.N."/>
            <person name="Spiegler S."/>
            <person name="Tivey A."/>
            <person name="Sugano S."/>
            <person name="White B."/>
            <person name="Walker D."/>
            <person name="Woodward J.R."/>
            <person name="Winckler T."/>
            <person name="Tanaka Y."/>
            <person name="Shaulsky G."/>
            <person name="Schleicher M."/>
            <person name="Weinstock G.M."/>
            <person name="Rosenthal A."/>
            <person name="Cox E.C."/>
            <person name="Chisholm R.L."/>
            <person name="Gibbs R.A."/>
            <person name="Loomis W.F."/>
            <person name="Platzer M."/>
            <person name="Kay R.R."/>
            <person name="Williams J.G."/>
            <person name="Dear P.H."/>
            <person name="Noegel A.A."/>
            <person name="Barrell B.G."/>
            <person name="Kuspa A."/>
        </authorList>
    </citation>
    <scope>NUCLEOTIDE SEQUENCE [LARGE SCALE GENOMIC DNA]</scope>
    <source>
        <strain>AX4</strain>
    </source>
</reference>
<name>MYBK_DICDI</name>
<gene>
    <name type="primary">mybK</name>
    <name type="ORF">DDB_G0276877</name>
</gene>